<proteinExistence type="inferred from homology"/>
<reference key="1">
    <citation type="submission" date="2006-08" db="EMBL/GenBank/DDBJ databases">
        <title>Complete sequence of chromosome 1 of Shewanella sp. MR-7.</title>
        <authorList>
            <person name="Copeland A."/>
            <person name="Lucas S."/>
            <person name="Lapidus A."/>
            <person name="Barry K."/>
            <person name="Detter J.C."/>
            <person name="Glavina del Rio T."/>
            <person name="Hammon N."/>
            <person name="Israni S."/>
            <person name="Dalin E."/>
            <person name="Tice H."/>
            <person name="Pitluck S."/>
            <person name="Kiss H."/>
            <person name="Brettin T."/>
            <person name="Bruce D."/>
            <person name="Han C."/>
            <person name="Tapia R."/>
            <person name="Gilna P."/>
            <person name="Schmutz J."/>
            <person name="Larimer F."/>
            <person name="Land M."/>
            <person name="Hauser L."/>
            <person name="Kyrpides N."/>
            <person name="Mikhailova N."/>
            <person name="Nealson K."/>
            <person name="Konstantinidis K."/>
            <person name="Klappenbach J."/>
            <person name="Tiedje J."/>
            <person name="Richardson P."/>
        </authorList>
    </citation>
    <scope>NUCLEOTIDE SEQUENCE [LARGE SCALE GENOMIC DNA]</scope>
    <source>
        <strain>MR-7</strain>
    </source>
</reference>
<gene>
    <name evidence="1" type="primary">rlmE</name>
    <name evidence="1" type="synonym">ftsJ</name>
    <name evidence="1" type="synonym">rrmJ</name>
    <name type="ordered locus">Shewmr7_1083</name>
</gene>
<evidence type="ECO:0000255" key="1">
    <source>
        <dbReference type="HAMAP-Rule" id="MF_01547"/>
    </source>
</evidence>
<dbReference type="EC" id="2.1.1.166" evidence="1"/>
<dbReference type="EMBL" id="CP000444">
    <property type="protein sequence ID" value="ABI42082.1"/>
    <property type="molecule type" value="Genomic_DNA"/>
</dbReference>
<dbReference type="SMR" id="Q0HXS3"/>
<dbReference type="KEGG" id="shm:Shewmr7_1083"/>
<dbReference type="HOGENOM" id="CLU_009422_4_0_6"/>
<dbReference type="GO" id="GO:0005737">
    <property type="term" value="C:cytoplasm"/>
    <property type="evidence" value="ECO:0007669"/>
    <property type="project" value="UniProtKB-SubCell"/>
</dbReference>
<dbReference type="GO" id="GO:0008650">
    <property type="term" value="F:rRNA (uridine-2'-O-)-methyltransferase activity"/>
    <property type="evidence" value="ECO:0007669"/>
    <property type="project" value="UniProtKB-UniRule"/>
</dbReference>
<dbReference type="FunFam" id="3.40.50.150:FF:000005">
    <property type="entry name" value="Ribosomal RNA large subunit methyltransferase E"/>
    <property type="match status" value="1"/>
</dbReference>
<dbReference type="Gene3D" id="3.40.50.150">
    <property type="entry name" value="Vaccinia Virus protein VP39"/>
    <property type="match status" value="1"/>
</dbReference>
<dbReference type="HAMAP" id="MF_01547">
    <property type="entry name" value="RNA_methyltr_E"/>
    <property type="match status" value="1"/>
</dbReference>
<dbReference type="InterPro" id="IPR050082">
    <property type="entry name" value="RNA_methyltr_RlmE"/>
</dbReference>
<dbReference type="InterPro" id="IPR002877">
    <property type="entry name" value="RNA_MeTrfase_FtsJ_dom"/>
</dbReference>
<dbReference type="InterPro" id="IPR015507">
    <property type="entry name" value="rRNA-MeTfrase_E"/>
</dbReference>
<dbReference type="InterPro" id="IPR029063">
    <property type="entry name" value="SAM-dependent_MTases_sf"/>
</dbReference>
<dbReference type="NCBIfam" id="NF008390">
    <property type="entry name" value="PRK11188.1"/>
    <property type="match status" value="1"/>
</dbReference>
<dbReference type="PANTHER" id="PTHR10920">
    <property type="entry name" value="RIBOSOMAL RNA METHYLTRANSFERASE"/>
    <property type="match status" value="1"/>
</dbReference>
<dbReference type="PANTHER" id="PTHR10920:SF18">
    <property type="entry name" value="RRNA METHYLTRANSFERASE 2, MITOCHONDRIAL"/>
    <property type="match status" value="1"/>
</dbReference>
<dbReference type="Pfam" id="PF01728">
    <property type="entry name" value="FtsJ"/>
    <property type="match status" value="1"/>
</dbReference>
<dbReference type="PIRSF" id="PIRSF005461">
    <property type="entry name" value="23S_rRNA_mtase"/>
    <property type="match status" value="1"/>
</dbReference>
<dbReference type="SUPFAM" id="SSF53335">
    <property type="entry name" value="S-adenosyl-L-methionine-dependent methyltransferases"/>
    <property type="match status" value="1"/>
</dbReference>
<sequence length="209" mass="23107">MSGKKRTASSNRWMLEHFDDHYVKLAQKRGLRSRAAFKLEELQQKDQLIRPGMTVVDLGAAPGGWSQVAVKLAGDKGKVIACDILPMDPIVGVDFLQGDFREEKVLEALLTRVGADKVDVVLSDMAPNMSGSDGVDQPRAMYLVELALDMCHQVLAPNGSFAVKVFQGEGFDEYMKAVKEAFKVVKTRKPDSSRARSREVYLVATGYKL</sequence>
<name>RLME_SHESR</name>
<protein>
    <recommendedName>
        <fullName evidence="1">Ribosomal RNA large subunit methyltransferase E</fullName>
        <ecNumber evidence="1">2.1.1.166</ecNumber>
    </recommendedName>
    <alternativeName>
        <fullName evidence="1">23S rRNA Um2552 methyltransferase</fullName>
    </alternativeName>
    <alternativeName>
        <fullName evidence="1">rRNA (uridine-2'-O-)-methyltransferase</fullName>
    </alternativeName>
</protein>
<organism>
    <name type="scientific">Shewanella sp. (strain MR-7)</name>
    <dbReference type="NCBI Taxonomy" id="60481"/>
    <lineage>
        <taxon>Bacteria</taxon>
        <taxon>Pseudomonadati</taxon>
        <taxon>Pseudomonadota</taxon>
        <taxon>Gammaproteobacteria</taxon>
        <taxon>Alteromonadales</taxon>
        <taxon>Shewanellaceae</taxon>
        <taxon>Shewanella</taxon>
    </lineage>
</organism>
<keyword id="KW-0963">Cytoplasm</keyword>
<keyword id="KW-0489">Methyltransferase</keyword>
<keyword id="KW-0698">rRNA processing</keyword>
<keyword id="KW-0949">S-adenosyl-L-methionine</keyword>
<keyword id="KW-0808">Transferase</keyword>
<feature type="chain" id="PRO_0000282799" description="Ribosomal RNA large subunit methyltransferase E">
    <location>
        <begin position="1"/>
        <end position="209"/>
    </location>
</feature>
<feature type="active site" description="Proton acceptor" evidence="1">
    <location>
        <position position="164"/>
    </location>
</feature>
<feature type="binding site" evidence="1">
    <location>
        <position position="63"/>
    </location>
    <ligand>
        <name>S-adenosyl-L-methionine</name>
        <dbReference type="ChEBI" id="CHEBI:59789"/>
    </ligand>
</feature>
<feature type="binding site" evidence="1">
    <location>
        <position position="65"/>
    </location>
    <ligand>
        <name>S-adenosyl-L-methionine</name>
        <dbReference type="ChEBI" id="CHEBI:59789"/>
    </ligand>
</feature>
<feature type="binding site" evidence="1">
    <location>
        <position position="83"/>
    </location>
    <ligand>
        <name>S-adenosyl-L-methionine</name>
        <dbReference type="ChEBI" id="CHEBI:59789"/>
    </ligand>
</feature>
<feature type="binding site" evidence="1">
    <location>
        <position position="99"/>
    </location>
    <ligand>
        <name>S-adenosyl-L-methionine</name>
        <dbReference type="ChEBI" id="CHEBI:59789"/>
    </ligand>
</feature>
<feature type="binding site" evidence="1">
    <location>
        <position position="124"/>
    </location>
    <ligand>
        <name>S-adenosyl-L-methionine</name>
        <dbReference type="ChEBI" id="CHEBI:59789"/>
    </ligand>
</feature>
<comment type="function">
    <text evidence="1">Specifically methylates the uridine in position 2552 of 23S rRNA at the 2'-O position of the ribose in the fully assembled 50S ribosomal subunit.</text>
</comment>
<comment type="catalytic activity">
    <reaction evidence="1">
        <text>uridine(2552) in 23S rRNA + S-adenosyl-L-methionine = 2'-O-methyluridine(2552) in 23S rRNA + S-adenosyl-L-homocysteine + H(+)</text>
        <dbReference type="Rhea" id="RHEA:42720"/>
        <dbReference type="Rhea" id="RHEA-COMP:10202"/>
        <dbReference type="Rhea" id="RHEA-COMP:10203"/>
        <dbReference type="ChEBI" id="CHEBI:15378"/>
        <dbReference type="ChEBI" id="CHEBI:57856"/>
        <dbReference type="ChEBI" id="CHEBI:59789"/>
        <dbReference type="ChEBI" id="CHEBI:65315"/>
        <dbReference type="ChEBI" id="CHEBI:74478"/>
        <dbReference type="EC" id="2.1.1.166"/>
    </reaction>
</comment>
<comment type="subcellular location">
    <subcellularLocation>
        <location evidence="1">Cytoplasm</location>
    </subcellularLocation>
</comment>
<comment type="similarity">
    <text evidence="1">Belongs to the class I-like SAM-binding methyltransferase superfamily. RNA methyltransferase RlmE family.</text>
</comment>
<accession>Q0HXS3</accession>